<organism>
    <name type="scientific">Phasmahyla jandaia</name>
    <name type="common">Jandaia leaf frog</name>
    <name type="synonym">Phyllomedusa jandaia</name>
    <dbReference type="NCBI Taxonomy" id="762504"/>
    <lineage>
        <taxon>Eukaryota</taxon>
        <taxon>Metazoa</taxon>
        <taxon>Chordata</taxon>
        <taxon>Craniata</taxon>
        <taxon>Vertebrata</taxon>
        <taxon>Euteleostomi</taxon>
        <taxon>Amphibia</taxon>
        <taxon>Batrachia</taxon>
        <taxon>Anura</taxon>
        <taxon>Neobatrachia</taxon>
        <taxon>Hyloidea</taxon>
        <taxon>Hylidae</taxon>
        <taxon>Phyllomedusinae</taxon>
        <taxon>Phasmahyla</taxon>
    </lineage>
</organism>
<feature type="peptide" id="PRO_0000404633" description="Des-Arg9-[Thr6]-bradykinin" evidence="2">
    <location>
        <begin position="1"/>
        <end position="8"/>
    </location>
</feature>
<proteinExistence type="evidence at protein level"/>
<dbReference type="GO" id="GO:0005576">
    <property type="term" value="C:extracellular region"/>
    <property type="evidence" value="ECO:0007669"/>
    <property type="project" value="UniProtKB-SubCell"/>
</dbReference>
<dbReference type="GO" id="GO:0090729">
    <property type="term" value="F:toxin activity"/>
    <property type="evidence" value="ECO:0007669"/>
    <property type="project" value="UniProtKB-KW"/>
</dbReference>
<dbReference type="GO" id="GO:0006952">
    <property type="term" value="P:defense response"/>
    <property type="evidence" value="ECO:0007669"/>
    <property type="project" value="UniProtKB-KW"/>
</dbReference>
<dbReference type="GO" id="GO:0042311">
    <property type="term" value="P:vasodilation"/>
    <property type="evidence" value="ECO:0007669"/>
    <property type="project" value="UniProtKB-KW"/>
</dbReference>
<comment type="function">
    <text evidence="1">Produces in vitro relaxation of rat arterial smooth muscle and constriction of intestinal smooth muscle (By similarity). May target bradykinin receptors (BDKRB).</text>
</comment>
<comment type="subcellular location">
    <subcellularLocation>
        <location evidence="2">Secreted</location>
    </subcellularLocation>
</comment>
<comment type="tissue specificity">
    <text evidence="2">Expressed by the skin glands.</text>
</comment>
<comment type="mass spectrometry" mass="917.4" method="MALDI" evidence="2"/>
<comment type="similarity">
    <text evidence="4">Belongs to the bradykinin-related peptide family.</text>
</comment>
<name>BRK4_PHAJA</name>
<sequence length="8" mass="918">RPPGFTPF</sequence>
<protein>
    <recommendedName>
        <fullName>Des-Arg9-[Thr6]-bradykinin</fullName>
        <shortName evidence="3">Des-Arg-[Thr6]-bradykinin</shortName>
    </recommendedName>
</protein>
<keyword id="KW-0878">Amphibian defense peptide</keyword>
<keyword id="KW-0903">Direct protein sequencing</keyword>
<keyword id="KW-1213">G-protein coupled receptor impairing toxin</keyword>
<keyword id="KW-0964">Secreted</keyword>
<keyword id="KW-0800">Toxin</keyword>
<keyword id="KW-0838">Vasoactive</keyword>
<keyword id="KW-0840">Vasodilator</keyword>
<evidence type="ECO:0000250" key="1"/>
<evidence type="ECO:0000269" key="2">
    <source>
    </source>
</evidence>
<evidence type="ECO:0000303" key="3">
    <source>
    </source>
</evidence>
<evidence type="ECO:0000305" key="4"/>
<reference evidence="4" key="1">
    <citation type="journal article" date="2011" name="Toxicon">
        <title>Peptidomic dissection of the skin secretion of Phasmahyla jandaia (Bokermann and Sazima, 1978) (Anura, Hylidae, Phyllomedusinae).</title>
        <authorList>
            <person name="Rates B."/>
            <person name="Silva L.P."/>
            <person name="Ireno I.C."/>
            <person name="Leite F.S."/>
            <person name="Borges M.H."/>
            <person name="Bloch C. Jr."/>
            <person name="De Lima M.E."/>
            <person name="Pimenta A.M."/>
        </authorList>
    </citation>
    <scope>PROTEIN SEQUENCE</scope>
    <scope>SUBCELLULAR LOCATION</scope>
    <scope>TISSUE SPECIFICITY</scope>
    <scope>MASS SPECTROMETRY</scope>
    <source>
        <tissue evidence="2">Skin secretion</tissue>
    </source>
</reference>
<accession>P86630</accession>